<name>ECOT1_LEIIN</name>
<feature type="chain" id="PRO_0000291591" description="Ecotin-like protein 1">
    <location>
        <begin position="1"/>
        <end position="146"/>
    </location>
</feature>
<comment type="similarity">
    <text evidence="1">Belongs to the protease inhibitor I11 (ecotin) family.</text>
</comment>
<gene>
    <name type="primary">ISP1</name>
    <name type="ORF">LinJ15.0350</name>
    <name type="ORF">LinJ_15_0350</name>
</gene>
<protein>
    <recommendedName>
        <fullName>Ecotin-like protein 1</fullName>
    </recommendedName>
    <alternativeName>
        <fullName>Inhibitor of serine peptidase 1</fullName>
        <shortName>LiISP1</shortName>
    </alternativeName>
</protein>
<dbReference type="EMBL" id="FR796447">
    <property type="protein sequence ID" value="CAM66755.1"/>
    <property type="molecule type" value="Genomic_DNA"/>
</dbReference>
<dbReference type="SMR" id="A4HWD2"/>
<dbReference type="STRING" id="5671.A4HWD2"/>
<dbReference type="KEGG" id="lif:LINJ_15_0350"/>
<dbReference type="VEuPathDB" id="TriTrypDB:LINF_150008400"/>
<dbReference type="eggNOG" id="ENOG502SNN7">
    <property type="taxonomic scope" value="Eukaryota"/>
</dbReference>
<dbReference type="InParanoid" id="A4HWD2"/>
<dbReference type="OMA" id="NDAANHQ"/>
<dbReference type="Proteomes" id="UP000008153">
    <property type="component" value="Chromosome 15"/>
</dbReference>
<dbReference type="GO" id="GO:0004867">
    <property type="term" value="F:serine-type endopeptidase inhibitor activity"/>
    <property type="evidence" value="ECO:0007669"/>
    <property type="project" value="InterPro"/>
</dbReference>
<dbReference type="Gene3D" id="2.60.40.550">
    <property type="entry name" value="Ecotin"/>
    <property type="match status" value="1"/>
</dbReference>
<dbReference type="InterPro" id="IPR036198">
    <property type="entry name" value="Ecotin_sf"/>
</dbReference>
<dbReference type="InterPro" id="IPR005658">
    <property type="entry name" value="Prot_inh_ecotin"/>
</dbReference>
<dbReference type="PANTHER" id="PTHR35890">
    <property type="match status" value="1"/>
</dbReference>
<dbReference type="PANTHER" id="PTHR35890:SF3">
    <property type="entry name" value="ECOTIN"/>
    <property type="match status" value="1"/>
</dbReference>
<dbReference type="Pfam" id="PF03974">
    <property type="entry name" value="Ecotin"/>
    <property type="match status" value="1"/>
</dbReference>
<dbReference type="SUPFAM" id="SSF49772">
    <property type="entry name" value="Ecotin, trypsin inhibitor"/>
    <property type="match status" value="1"/>
</dbReference>
<reference key="1">
    <citation type="journal article" date="2007" name="Nat. Genet.">
        <title>Comparative genomic analysis of three Leishmania species that cause diverse human disease.</title>
        <authorList>
            <person name="Peacock C.S."/>
            <person name="Seeger K."/>
            <person name="Harris D."/>
            <person name="Murphy L."/>
            <person name="Ruiz J.C."/>
            <person name="Quail M.A."/>
            <person name="Peters N."/>
            <person name="Adlem E."/>
            <person name="Tivey A."/>
            <person name="Aslett M."/>
            <person name="Kerhornou A."/>
            <person name="Ivens A."/>
            <person name="Fraser A."/>
            <person name="Rajandream M.-A."/>
            <person name="Carver T."/>
            <person name="Norbertczak H."/>
            <person name="Chillingworth T."/>
            <person name="Hance Z."/>
            <person name="Jagels K."/>
            <person name="Moule S."/>
            <person name="Ormond D."/>
            <person name="Rutter S."/>
            <person name="Sqaures R."/>
            <person name="Whitehead S."/>
            <person name="Rabbinowitsch E."/>
            <person name="Arrowsmith C."/>
            <person name="White B."/>
            <person name="Thurston S."/>
            <person name="Bringaud F."/>
            <person name="Baldauf S.L."/>
            <person name="Faulconbridge A."/>
            <person name="Jeffares D."/>
            <person name="Depledge D.P."/>
            <person name="Oyola S.O."/>
            <person name="Hilley J.D."/>
            <person name="Brito L.O."/>
            <person name="Tosi L.R.O."/>
            <person name="Barrell B."/>
            <person name="Cruz A.K."/>
            <person name="Mottram J.C."/>
            <person name="Smith D.F."/>
            <person name="Berriman M."/>
        </authorList>
    </citation>
    <scope>NUCLEOTIDE SEQUENCE [LARGE SCALE GENOMIC DNA]</scope>
    <source>
        <strain>JPCM5</strain>
    </source>
</reference>
<sequence length="146" mass="16489">MSYCKIEAPYPTAEAGEKRIIFALDPKGDEAEQEQYMLQLIPGRVLEMSRNDAANHQTLGGSIEQHTVEGWGAKFFHVKLAKQAASTLMHVHDEDHSEKVRKFVAMPNPPLFPYRSRCPVVVYLPNDAELRYGIWCGGQQMQAVTE</sequence>
<proteinExistence type="inferred from homology"/>
<organism>
    <name type="scientific">Leishmania infantum</name>
    <dbReference type="NCBI Taxonomy" id="5671"/>
    <lineage>
        <taxon>Eukaryota</taxon>
        <taxon>Discoba</taxon>
        <taxon>Euglenozoa</taxon>
        <taxon>Kinetoplastea</taxon>
        <taxon>Metakinetoplastina</taxon>
        <taxon>Trypanosomatida</taxon>
        <taxon>Trypanosomatidae</taxon>
        <taxon>Leishmaniinae</taxon>
        <taxon>Leishmania</taxon>
    </lineage>
</organism>
<keyword id="KW-1185">Reference proteome</keyword>
<evidence type="ECO:0000305" key="1"/>
<accession>A4HWD2</accession>